<organismHost>
    <name type="scientific">Mammalia</name>
    <dbReference type="NCBI Taxonomy" id="40674"/>
</organismHost>
<proteinExistence type="evidence at protein level"/>
<organism>
    <name type="scientific">Reovirus type 1 (strain Lang)</name>
    <name type="common">T1L</name>
    <name type="synonym">Mammalian orthoreovirus 1</name>
    <dbReference type="NCBI Taxonomy" id="10884"/>
    <lineage>
        <taxon>Viruses</taxon>
        <taxon>Riboviria</taxon>
        <taxon>Orthornavirae</taxon>
        <taxon>Duplornaviricota</taxon>
        <taxon>Resentoviricetes</taxon>
        <taxon>Reovirales</taxon>
        <taxon>Spinareoviridae</taxon>
        <taxon>Orthoreovirus</taxon>
        <taxon>Mammalian orthoreovirus</taxon>
    </lineage>
</organism>
<feature type="chain" id="PRO_0000222747" description="Microtubule-associated protein mu-2">
    <location>
        <begin position="1"/>
        <end position="736"/>
    </location>
</feature>
<feature type="mutagenesis site" description="Loss of ATPase activity; when associated with A-419. No effect on microtubules association." evidence="3">
    <original>K</original>
    <variation>A</variation>
    <location>
        <position position="415"/>
    </location>
</feature>
<feature type="mutagenesis site" description="Loss of ATPase activity; when associated with A-415. No effect on microtubules association." evidence="3">
    <original>K</original>
    <variation>A</variation>
    <location>
        <position position="419"/>
    </location>
</feature>
<feature type="sequence conflict" description="In Ref. 2; AAL99936." evidence="5" ref="2">
    <original>L</original>
    <variation>F</variation>
    <location>
        <position position="302"/>
    </location>
</feature>
<keyword id="KW-0167">Capsid protein</keyword>
<keyword id="KW-1035">Host cytoplasm</keyword>
<keyword id="KW-1037">Host cytoskeleton</keyword>
<keyword id="KW-0945">Host-virus interaction</keyword>
<keyword id="KW-1090">Inhibition of host innate immune response by virus</keyword>
<keyword id="KW-1114">Inhibition of host interferon signaling pathway by virus</keyword>
<keyword id="KW-1094">Inhibition of host IRF9 by virus</keyword>
<keyword id="KW-0922">Interferon antiviral system evasion</keyword>
<keyword id="KW-1185">Reference proteome</keyword>
<keyword id="KW-0899">Viral immunoevasion</keyword>
<keyword id="KW-0946">Virion</keyword>
<comment type="function">
    <text evidence="4">Minor inner capsid (core) component. Displays NTPase and RNA 5'-triphosphatase (RTPase) activities. ATP is the preferred substrate for hydrolysis. May function as a cofactor of polymerase lambda-3. Associates with microtubules and plays a role in the formation, structural organization and morphology of viral inclusions, where the assembly of cores and the replication of viral RNA occur. Together with mu-NS, recruits the other core proteins to these inclusions.</text>
</comment>
<comment type="cofactor">
    <cofactor>
        <name>a divalent metal cation</name>
        <dbReference type="ChEBI" id="CHEBI:60240"/>
    </cofactor>
</comment>
<comment type="subunit">
    <text evidence="2 3">Interacts with protein mu-NS; in viral inclusions. Interacts with polymerase lambda-3; this interaction stimulates the ATPase activity of mu-2.</text>
</comment>
<comment type="subcellular location">
    <subcellularLocation>
        <location evidence="5">Virion</location>
    </subcellularLocation>
    <subcellularLocation>
        <location evidence="1">Host cytoplasm</location>
        <location evidence="1">Host cytoskeleton</location>
    </subcellularLocation>
    <text evidence="1">Found in the inner capsid (12 copies). Associates with microtubules (By similarity).</text>
</comment>
<comment type="similarity">
    <text evidence="5">Belongs to the orthoreovirus mu-2 protein family.</text>
</comment>
<evidence type="ECO:0000250" key="1"/>
<evidence type="ECO:0000269" key="2">
    <source>
    </source>
</evidence>
<evidence type="ECO:0000269" key="3">
    <source>
    </source>
</evidence>
<evidence type="ECO:0000269" key="4">
    <source>
    </source>
</evidence>
<evidence type="ECO:0000305" key="5"/>
<name>MU2_REOVL</name>
<accession>Q00335</accession>
<accession>Q8QT11</accession>
<sequence>MAYIAVPAVVDSRSSEAIGLLESFGVDAGADANDVSYQDHDYVLDQLQYMLDGYEAGDVIDALVHKNWLHHSVYCLLPPKSQLLEYWKSNPSVIPDNVDRRLRKRLMLKKDLRKDDEYNQLARAFKISDVYAPLISSTTSPMTMIQNLNQGEIVYTTTDRVIGARILLYAPRKYYASTLSFTMTKCIIPFGKEVGRVPHSRFNVGTFPSIATPKCFVMSGVDIESIPNEFIKLFYQRVKSVHANILNDISPQIVSDMINRKRLRVHTPSDRRAAQLMHLPYHVKRGASHVDVYKVDVVDVLLEVVDVADGLRNVSRKLTMHTVPVCILEMLGIEIADYCIRQEDGMFTDWFLLLTMLSDGLTDRRTHCQYLINPSSVPPDVILNISITGFINRHTIDVMPDIYDFVKPIGAVLPKGSFKSTIMRVLDSISILGVQIMPRAHVVDSDEVGEQMEPTFEHAVMEIYKGIAGVDSLDDLIKWVLNSDLIPHDDRLGQLFQAFLPLAKDLLAPMARKFYDNSMSEGRLLTFAHADSELLNANYFGHLLRLKIPYITEVNLMIRKNREGGELFQLVLSYLYKMYATSAQPKWFGSLLRLLICPWLHMEKLIGEADPASTSAEIGWHIPREQLMQDGWCGCEDGFIPYVSIRAPRLVMEELMEKNWGQYHAQVIVTDQLVVGEPRRVSAKAVIKGNHLPVKLVSRFACFTLTAKYEMRLSCGHSTGRGAAYNARLAFRSDLA</sequence>
<protein>
    <recommendedName>
        <fullName>Microtubule-associated protein mu-2</fullName>
        <shortName>Mu2</shortName>
    </recommendedName>
</protein>
<dbReference type="EMBL" id="X59945">
    <property type="protein sequence ID" value="CAA42570.1"/>
    <property type="molecule type" value="Genomic_RNA"/>
</dbReference>
<dbReference type="EMBL" id="AF461682">
    <property type="protein sequence ID" value="AAL99936.1"/>
    <property type="molecule type" value="mRNA"/>
</dbReference>
<dbReference type="PIR" id="S23654">
    <property type="entry name" value="S23654"/>
</dbReference>
<dbReference type="SMR" id="Q00335"/>
<dbReference type="IntAct" id="Q00335">
    <property type="interactions" value="15"/>
</dbReference>
<dbReference type="Proteomes" id="UP000007253">
    <property type="component" value="Genome"/>
</dbReference>
<dbReference type="GO" id="GO:0030430">
    <property type="term" value="C:host cell cytoplasm"/>
    <property type="evidence" value="ECO:0007669"/>
    <property type="project" value="UniProtKB-KW"/>
</dbReference>
<dbReference type="GO" id="GO:0044163">
    <property type="term" value="C:host cytoskeleton"/>
    <property type="evidence" value="ECO:0007669"/>
    <property type="project" value="UniProtKB-SubCell"/>
</dbReference>
<dbReference type="GO" id="GO:0019028">
    <property type="term" value="C:viral capsid"/>
    <property type="evidence" value="ECO:0007669"/>
    <property type="project" value="UniProtKB-KW"/>
</dbReference>
<dbReference type="GO" id="GO:0005198">
    <property type="term" value="F:structural molecule activity"/>
    <property type="evidence" value="ECO:0007669"/>
    <property type="project" value="InterPro"/>
</dbReference>
<dbReference type="GO" id="GO:0039560">
    <property type="term" value="P:symbiont-mediated suppression of host JAK-STAT cascade via inhibition of host IRF9 activity"/>
    <property type="evidence" value="ECO:0007669"/>
    <property type="project" value="UniProtKB-KW"/>
</dbReference>
<dbReference type="GO" id="GO:0039502">
    <property type="term" value="P:symbiont-mediated suppression of host type I interferon-mediated signaling pathway"/>
    <property type="evidence" value="ECO:0007669"/>
    <property type="project" value="UniProtKB-KW"/>
</dbReference>
<dbReference type="InterPro" id="IPR012494">
    <property type="entry name" value="Reovirus_Mu2"/>
</dbReference>
<dbReference type="Pfam" id="PF07781">
    <property type="entry name" value="Reovirus_Mu2"/>
    <property type="match status" value="1"/>
</dbReference>
<gene>
    <name type="primary">M1</name>
</gene>
<reference key="1">
    <citation type="journal article" date="1992" name="Virus Res.">
        <title>Nucleotide sequence comparison of the M1 genome segment of reovirus type 1 Lang and type 3 Dearing.</title>
        <authorList>
            <person name="Zou S."/>
            <person name="Brown E.G."/>
        </authorList>
    </citation>
    <scope>NUCLEOTIDE SEQUENCE [GENOMIC RNA]</scope>
</reference>
<reference key="2">
    <citation type="journal article" date="2002" name="J. Virol.">
        <title>Reovirus core protein mu2 determines the filamentous morphology of viral inclusion bodies by interacting with and stabilizing microtubules.</title>
        <authorList>
            <person name="Parker J.S.L."/>
            <person name="Broering T.J."/>
            <person name="Kim J."/>
            <person name="Higgins D.E."/>
            <person name="Nibert M.L."/>
        </authorList>
    </citation>
    <scope>NUCLEOTIDE SEQUENCE [MRNA]</scope>
</reference>
<reference key="3">
    <citation type="journal article" date="2003" name="J. Virol.">
        <title>Reovirus sigma NS protein localizes to inclusions through an association requiring the mu NS amino terminus.</title>
        <authorList>
            <person name="Miller C.L."/>
            <person name="Broering T.J."/>
            <person name="Parker J.S.L."/>
            <person name="Arnold M.M."/>
            <person name="Nibert M.L."/>
        </authorList>
    </citation>
    <scope>INTERACTION WITH PROTEIN MU-NS</scope>
</reference>
<reference key="4">
    <citation type="journal article" date="2004" name="J. Biol. Chem.">
        <title>Nucleoside and RNA triphosphatase activities of orthoreovirus transcriptase cofactor mu2.</title>
        <authorList>
            <person name="Kim J."/>
            <person name="Parker J.S.L."/>
            <person name="Murray K.E."/>
            <person name="Nibert M.L."/>
        </authorList>
    </citation>
    <scope>INTERACTION WITH POLYMERASE LAMBDA-3</scope>
    <scope>CHARACTERIZATION OF NTPASE ACTIVITY</scope>
    <scope>RTPASE ACTIVITY</scope>
    <scope>MUTAGENESIS OF LYS-415 AND LYS-419</scope>
</reference>
<reference key="5">
    <citation type="journal article" date="2004" name="J. Virol.">
        <title>Reovirus nonstructural protein mu NS recruits viral core surface proteins and entering core particles to factory-like inclusions.</title>
        <authorList>
            <person name="Broering T.J."/>
            <person name="Kim J."/>
            <person name="Miller C.L."/>
            <person name="Piggott C.D."/>
            <person name="Dinoso J.B."/>
            <person name="Nibert M.L."/>
            <person name="Parker J.S.L."/>
        </authorList>
    </citation>
    <scope>FUNCTION</scope>
</reference>